<dbReference type="EMBL" id="AP003573">
    <property type="protein sequence ID" value="BAD37527.1"/>
    <property type="molecule type" value="Genomic_DNA"/>
</dbReference>
<dbReference type="EMBL" id="AP008212">
    <property type="protein sequence ID" value="BAF20069.2"/>
    <property type="molecule type" value="Genomic_DNA"/>
</dbReference>
<dbReference type="EMBL" id="AP014962">
    <property type="protein sequence ID" value="BAS98785.1"/>
    <property type="molecule type" value="Genomic_DNA"/>
</dbReference>
<dbReference type="EMBL" id="AK108500">
    <property type="status" value="NOT_ANNOTATED_CDS"/>
    <property type="molecule type" value="mRNA"/>
</dbReference>
<dbReference type="RefSeq" id="XP_015643134.1">
    <property type="nucleotide sequence ID" value="XM_015787648.1"/>
</dbReference>
<dbReference type="RefSeq" id="XP_015643135.1">
    <property type="nucleotide sequence ID" value="XM_015787649.1"/>
</dbReference>
<dbReference type="RefSeq" id="XP_015643136.1">
    <property type="nucleotide sequence ID" value="XM_015787650.1"/>
</dbReference>
<dbReference type="RefSeq" id="XP_015643137.1">
    <property type="nucleotide sequence ID" value="XM_015787651.1"/>
</dbReference>
<dbReference type="RefSeq" id="XP_015643138.1">
    <property type="nucleotide sequence ID" value="XM_015787652.1"/>
</dbReference>
<dbReference type="RefSeq" id="XP_015643139.1">
    <property type="nucleotide sequence ID" value="XM_015787653.1"/>
</dbReference>
<dbReference type="RefSeq" id="XP_015643140.1">
    <property type="nucleotide sequence ID" value="XM_015787654.1"/>
</dbReference>
<dbReference type="RefSeq" id="XP_015643142.1">
    <property type="nucleotide sequence ID" value="XM_015787656.1"/>
</dbReference>
<dbReference type="SMR" id="Q67WE2"/>
<dbReference type="FunCoup" id="Q67WE2">
    <property type="interactions" value="3"/>
</dbReference>
<dbReference type="STRING" id="39947.Q67WE2"/>
<dbReference type="PaxDb" id="39947-Q67WE2"/>
<dbReference type="EnsemblPlants" id="Os06t0638700-01">
    <property type="protein sequence ID" value="Os06t0638700-01"/>
    <property type="gene ID" value="Os06g0638700"/>
</dbReference>
<dbReference type="Gramene" id="Os06t0638700-01">
    <property type="protein sequence ID" value="Os06t0638700-01"/>
    <property type="gene ID" value="Os06g0638700"/>
</dbReference>
<dbReference type="KEGG" id="dosa:Os06g0638700"/>
<dbReference type="eggNOG" id="ENOG502QRBQ">
    <property type="taxonomic scope" value="Eukaryota"/>
</dbReference>
<dbReference type="HOGENOM" id="CLU_030671_4_1_1"/>
<dbReference type="InParanoid" id="Q67WE2"/>
<dbReference type="OMA" id="HMINPRM"/>
<dbReference type="OrthoDB" id="7108654at2759"/>
<dbReference type="Proteomes" id="UP000000763">
    <property type="component" value="Chromosome 6"/>
</dbReference>
<dbReference type="Proteomes" id="UP000059680">
    <property type="component" value="Chromosome 6"/>
</dbReference>
<dbReference type="GO" id="GO:0005576">
    <property type="term" value="C:extracellular region"/>
    <property type="evidence" value="ECO:0007669"/>
    <property type="project" value="UniProtKB-KW"/>
</dbReference>
<dbReference type="GO" id="GO:0004061">
    <property type="term" value="F:arylformamidase activity"/>
    <property type="evidence" value="ECO:0000318"/>
    <property type="project" value="GO_Central"/>
</dbReference>
<dbReference type="GO" id="GO:0019441">
    <property type="term" value="P:L-tryptophan catabolic process to kynurenine"/>
    <property type="evidence" value="ECO:0000318"/>
    <property type="project" value="GO_Central"/>
</dbReference>
<dbReference type="FunFam" id="3.50.30.50:FF:000002">
    <property type="entry name" value="Kynurenine formamidase"/>
    <property type="match status" value="1"/>
</dbReference>
<dbReference type="Gene3D" id="3.50.30.50">
    <property type="entry name" value="Putative cyclase"/>
    <property type="match status" value="1"/>
</dbReference>
<dbReference type="InterPro" id="IPR007325">
    <property type="entry name" value="KFase/CYL"/>
</dbReference>
<dbReference type="InterPro" id="IPR037175">
    <property type="entry name" value="KFase_sf"/>
</dbReference>
<dbReference type="PANTHER" id="PTHR31118:SF27">
    <property type="entry name" value="CYCLASE-LIKE PROTEIN 1"/>
    <property type="match status" value="1"/>
</dbReference>
<dbReference type="PANTHER" id="PTHR31118">
    <property type="entry name" value="CYCLASE-LIKE PROTEIN 2"/>
    <property type="match status" value="1"/>
</dbReference>
<dbReference type="Pfam" id="PF04199">
    <property type="entry name" value="Cyclase"/>
    <property type="match status" value="1"/>
</dbReference>
<dbReference type="SUPFAM" id="SSF102198">
    <property type="entry name" value="Putative cyclase"/>
    <property type="match status" value="1"/>
</dbReference>
<organism>
    <name type="scientific">Oryza sativa subsp. japonica</name>
    <name type="common">Rice</name>
    <dbReference type="NCBI Taxonomy" id="39947"/>
    <lineage>
        <taxon>Eukaryota</taxon>
        <taxon>Viridiplantae</taxon>
        <taxon>Streptophyta</taxon>
        <taxon>Embryophyta</taxon>
        <taxon>Tracheophyta</taxon>
        <taxon>Spermatophyta</taxon>
        <taxon>Magnoliopsida</taxon>
        <taxon>Liliopsida</taxon>
        <taxon>Poales</taxon>
        <taxon>Poaceae</taxon>
        <taxon>BOP clade</taxon>
        <taxon>Oryzoideae</taxon>
        <taxon>Oryzeae</taxon>
        <taxon>Oryzinae</taxon>
        <taxon>Oryza</taxon>
        <taxon>Oryza sativa</taxon>
    </lineage>
</organism>
<comment type="function">
    <text evidence="1">May be involved in response to stresses.</text>
</comment>
<comment type="subcellular location">
    <subcellularLocation>
        <location evidence="1">Secreted</location>
        <location evidence="1">Extracellular space</location>
        <location evidence="1">Extracellular matrix</location>
    </subcellularLocation>
</comment>
<comment type="tissue specificity">
    <text evidence="3">Highly expressed in leaf sheaths and flag leaves. Expressed in roots, stems, leaf collars, glumes, young panicles and pistils.</text>
</comment>
<comment type="induction">
    <text>Induced bycold, salt and drought stresses. Induced by abscisic acid, auxine, brassinosteroid, gibberellin, jasmonate, kinetin, reactive oxygen species and salicylate.</text>
</comment>
<comment type="similarity">
    <text evidence="5">Belongs to the Cyclase 1 superfamily.</text>
</comment>
<evidence type="ECO:0000250" key="1">
    <source>
        <dbReference type="UniProtKB" id="Q6YX89"/>
    </source>
</evidence>
<evidence type="ECO:0000255" key="2"/>
<evidence type="ECO:0000269" key="3">
    <source>
    </source>
</evidence>
<evidence type="ECO:0000303" key="4">
    <source>
    </source>
</evidence>
<evidence type="ECO:0000305" key="5"/>
<evidence type="ECO:0000312" key="6">
    <source>
        <dbReference type="EMBL" id="BAD37527.1"/>
    </source>
</evidence>
<evidence type="ECO:0000312" key="7">
    <source>
        <dbReference type="EMBL" id="BAS98785.1"/>
    </source>
</evidence>
<sequence length="272" mass="29194">MAHLATVVLLLVAAARQAPLAAGDHSANPRLPTCAAAPDVAAPQEHGDGGGVGGGRRILDITHAVRAELPVLGSCDGVGALVRLKKSMANGSRSNLSELRMSVHTGTHVDAPGHMWQPHFDAGLDVDTLDLGLLNGPALLVDVPRHSNVTAEVMESLNIPRGVRRVLFRTMNTDKRLMWQKESDLSFVGFTEDGAQWLVGYTDIKLVGVDYLSVASYEHMIPAHVVFLKSKEIVIVEALKLDDVEPGMYMLHCLPLRLAGAEGSPVRCILIK</sequence>
<proteinExistence type="evidence at transcript level"/>
<keyword id="KW-0272">Extracellular matrix</keyword>
<keyword id="KW-1185">Reference proteome</keyword>
<keyword id="KW-0964">Secreted</keyword>
<keyword id="KW-0732">Signal</keyword>
<keyword id="KW-0346">Stress response</keyword>
<name>CYL2_ORYSJ</name>
<gene>
    <name evidence="4" type="primary">CYL2</name>
    <name evidence="7" type="ordered locus">Os06g0638700</name>
    <name evidence="5" type="ordered locus">LOC_Os06g43180</name>
    <name evidence="6" type="ORF">P0523F01.29</name>
</gene>
<accession>Q67WE2</accession>
<accession>Q0DAQ4</accession>
<reference key="1">
    <citation type="journal article" date="2005" name="Nature">
        <title>The map-based sequence of the rice genome.</title>
        <authorList>
            <consortium name="International rice genome sequencing project (IRGSP)"/>
        </authorList>
    </citation>
    <scope>NUCLEOTIDE SEQUENCE [LARGE SCALE GENOMIC DNA]</scope>
    <source>
        <strain>cv. Nipponbare</strain>
    </source>
</reference>
<reference key="2">
    <citation type="journal article" date="2008" name="Nucleic Acids Res.">
        <title>The rice annotation project database (RAP-DB): 2008 update.</title>
        <authorList>
            <consortium name="The rice annotation project (RAP)"/>
        </authorList>
    </citation>
    <scope>GENOME REANNOTATION</scope>
    <source>
        <strain>cv. Nipponbare</strain>
    </source>
</reference>
<reference key="3">
    <citation type="journal article" date="2013" name="Rice">
        <title>Improvement of the Oryza sativa Nipponbare reference genome using next generation sequence and optical map data.</title>
        <authorList>
            <person name="Kawahara Y."/>
            <person name="de la Bastide M."/>
            <person name="Hamilton J.P."/>
            <person name="Kanamori H."/>
            <person name="McCombie W.R."/>
            <person name="Ouyang S."/>
            <person name="Schwartz D.C."/>
            <person name="Tanaka T."/>
            <person name="Wu J."/>
            <person name="Zhou S."/>
            <person name="Childs K.L."/>
            <person name="Davidson R.M."/>
            <person name="Lin H."/>
            <person name="Quesada-Ocampo L."/>
            <person name="Vaillancourt B."/>
            <person name="Sakai H."/>
            <person name="Lee S.S."/>
            <person name="Kim J."/>
            <person name="Numa H."/>
            <person name="Itoh T."/>
            <person name="Buell C.R."/>
            <person name="Matsumoto T."/>
        </authorList>
    </citation>
    <scope>GENOME REANNOTATION</scope>
    <source>
        <strain>cv. Nipponbare</strain>
    </source>
</reference>
<reference key="4">
    <citation type="journal article" date="2003" name="Science">
        <title>Collection, mapping, and annotation of over 28,000 cDNA clones from japonica rice.</title>
        <authorList>
            <consortium name="The rice full-length cDNA consortium"/>
        </authorList>
    </citation>
    <scope>NUCLEOTIDE SEQUENCE [LARGE SCALE MRNA]</scope>
    <source>
        <strain>cv. Nipponbare</strain>
    </source>
</reference>
<reference key="5">
    <citation type="journal article" date="2015" name="J. Plant Physiol.">
        <title>Characterization of a novel cyclase-like gene family involved in controlling stress tolerance in rice.</title>
        <authorList>
            <person name="Qin Y."/>
            <person name="Shen X."/>
            <person name="Wang N."/>
            <person name="Ding X."/>
        </authorList>
    </citation>
    <scope>TISSUE SPECIFICITY</scope>
    <scope>INDUCTION</scope>
    <scope>GENE FAMILY</scope>
    <scope>NOMENCLATURE</scope>
</reference>
<feature type="signal peptide" evidence="2">
    <location>
        <begin position="1"/>
        <end position="17"/>
    </location>
</feature>
<feature type="chain" id="PRO_5011947508" description="Cyclase-like protein 2">
    <location>
        <begin position="18"/>
        <end position="272"/>
    </location>
</feature>
<protein>
    <recommendedName>
        <fullName evidence="4">Cyclase-like protein 2</fullName>
        <shortName evidence="4">OsCYL2</shortName>
    </recommendedName>
</protein>